<protein>
    <recommendedName>
        <fullName evidence="3">ATP-dependent ribose-1-phosphate kinase</fullName>
        <shortName evidence="3">ATP-R1P kinase</shortName>
        <ecNumber evidence="2">2.7.1.239</ecNumber>
    </recommendedName>
    <alternativeName>
        <fullName evidence="4">Alpha-D-ribose-1-phosphate 5-kinase (ATP)</fullName>
    </alternativeName>
    <alternativeName>
        <fullName evidence="3">Hx-RbsK</fullName>
    </alternativeName>
</protein>
<name>R1PKT_HALXS</name>
<accession>F8D4I6</accession>
<keyword id="KW-0067">ATP-binding</keyword>
<keyword id="KW-0119">Carbohydrate metabolism</keyword>
<keyword id="KW-0418">Kinase</keyword>
<keyword id="KW-0460">Magnesium</keyword>
<keyword id="KW-0547">Nucleotide-binding</keyword>
<keyword id="KW-1185">Reference proteome</keyword>
<keyword id="KW-0808">Transferase</keyword>
<reference key="1">
    <citation type="journal article" date="2012" name="Stand. Genomic Sci.">
        <title>Complete genome sequence of Halopiger xanaduensis type strain (SH-6(T)).</title>
        <authorList>
            <person name="Anderson I."/>
            <person name="Tindall B.J."/>
            <person name="Rohde M."/>
            <person name="Lucas S."/>
            <person name="Han J."/>
            <person name="Lapidus A."/>
            <person name="Cheng J.F."/>
            <person name="Goodwin L."/>
            <person name="Pitluck S."/>
            <person name="Peters L."/>
            <person name="Pati A."/>
            <person name="Mikhailova N."/>
            <person name="Pagani I."/>
            <person name="Teshima H."/>
            <person name="Han C."/>
            <person name="Tapia R."/>
            <person name="Land M."/>
            <person name="Woyke T."/>
            <person name="Klenk H.P."/>
            <person name="Kyrpides N."/>
            <person name="Ivanova N."/>
        </authorList>
    </citation>
    <scope>NUCLEOTIDE SEQUENCE [LARGE SCALE GENOMIC DNA]</scope>
    <source>
        <strain>DSM 18323 / CECT 7173 / CGMCC 1.6379 / JCM 14033 / SH-6</strain>
    </source>
</reference>
<reference key="2">
    <citation type="journal article" date="2022" name="Commun. Biol.">
        <title>A non-carboxylating pentose bisphosphate pathway in halophilic archaea.</title>
        <authorList>
            <person name="Sato T."/>
            <person name="Utashima S.H."/>
            <person name="Yoshii Y."/>
            <person name="Hirata K."/>
            <person name="Kanda S."/>
            <person name="Onoda Y."/>
            <person name="Jin J.Q."/>
            <person name="Xiao S."/>
            <person name="Minami R."/>
            <person name="Fukushima H."/>
            <person name="Noguchi A."/>
            <person name="Manabe Y."/>
            <person name="Fukase K."/>
            <person name="Atomi H."/>
        </authorList>
    </citation>
    <scope>FUNCTION</scope>
    <scope>CATALYTIC ACTIVITY</scope>
    <scope>ACTIVITY REGULATION</scope>
</reference>
<dbReference type="EC" id="2.7.1.239" evidence="2"/>
<dbReference type="EMBL" id="CP002839">
    <property type="protein sequence ID" value="AEH36314.1"/>
    <property type="molecule type" value="Genomic_DNA"/>
</dbReference>
<dbReference type="RefSeq" id="WP_013879208.1">
    <property type="nucleotide sequence ID" value="NC_015666.1"/>
</dbReference>
<dbReference type="SMR" id="F8D4I6"/>
<dbReference type="STRING" id="797210.Halxa_1682"/>
<dbReference type="GeneID" id="10796651"/>
<dbReference type="KEGG" id="hxa:Halxa_1682"/>
<dbReference type="eggNOG" id="arCOG00014">
    <property type="taxonomic scope" value="Archaea"/>
</dbReference>
<dbReference type="HOGENOM" id="CLU_027634_6_0_2"/>
<dbReference type="OrthoDB" id="26949at2157"/>
<dbReference type="BioCyc" id="MetaCyc:MONOMER-124392"/>
<dbReference type="Proteomes" id="UP000006794">
    <property type="component" value="Chromosome"/>
</dbReference>
<dbReference type="GO" id="GO:0005524">
    <property type="term" value="F:ATP binding"/>
    <property type="evidence" value="ECO:0007669"/>
    <property type="project" value="UniProtKB-KW"/>
</dbReference>
<dbReference type="GO" id="GO:0016301">
    <property type="term" value="F:kinase activity"/>
    <property type="evidence" value="ECO:0007669"/>
    <property type="project" value="UniProtKB-KW"/>
</dbReference>
<dbReference type="GO" id="GO:0006796">
    <property type="term" value="P:phosphate-containing compound metabolic process"/>
    <property type="evidence" value="ECO:0007669"/>
    <property type="project" value="UniProtKB-ARBA"/>
</dbReference>
<dbReference type="Gene3D" id="3.40.1190.20">
    <property type="match status" value="1"/>
</dbReference>
<dbReference type="InterPro" id="IPR002173">
    <property type="entry name" value="Carboh/pur_kinase_PfkB_CS"/>
</dbReference>
<dbReference type="InterPro" id="IPR011611">
    <property type="entry name" value="PfkB_dom"/>
</dbReference>
<dbReference type="InterPro" id="IPR002139">
    <property type="entry name" value="Ribo/fructo_kinase"/>
</dbReference>
<dbReference type="InterPro" id="IPR029056">
    <property type="entry name" value="Ribokinase-like"/>
</dbReference>
<dbReference type="PANTHER" id="PTHR10584:SF166">
    <property type="entry name" value="RIBOKINASE"/>
    <property type="match status" value="1"/>
</dbReference>
<dbReference type="PANTHER" id="PTHR10584">
    <property type="entry name" value="SUGAR KINASE"/>
    <property type="match status" value="1"/>
</dbReference>
<dbReference type="Pfam" id="PF00294">
    <property type="entry name" value="PfkB"/>
    <property type="match status" value="1"/>
</dbReference>
<dbReference type="PRINTS" id="PR00990">
    <property type="entry name" value="RIBOKINASE"/>
</dbReference>
<dbReference type="SUPFAM" id="SSF53613">
    <property type="entry name" value="Ribokinase-like"/>
    <property type="match status" value="1"/>
</dbReference>
<dbReference type="PROSITE" id="PS00584">
    <property type="entry name" value="PFKB_KINASES_2"/>
    <property type="match status" value="1"/>
</dbReference>
<evidence type="ECO:0000250" key="1">
    <source>
        <dbReference type="UniProtKB" id="Q57849"/>
    </source>
</evidence>
<evidence type="ECO:0000269" key="2">
    <source>
    </source>
</evidence>
<evidence type="ECO:0000303" key="3">
    <source>
    </source>
</evidence>
<evidence type="ECO:0000305" key="4"/>
<evidence type="ECO:0000305" key="5">
    <source>
    </source>
</evidence>
<evidence type="ECO:0000312" key="6">
    <source>
        <dbReference type="EMBL" id="AEH36314.1"/>
    </source>
</evidence>
<feature type="chain" id="PRO_0000459713" description="ATP-dependent ribose-1-phosphate kinase">
    <location>
        <begin position="1"/>
        <end position="296"/>
    </location>
</feature>
<feature type="active site" description="Proton acceptor" evidence="1">
    <location>
        <position position="242"/>
    </location>
</feature>
<comment type="function">
    <text evidence="2">Kinase involved in the non-carboxylating pentose bisphosphate pathway, a nucleoside degradation pathway present in some halophilic archaea (PubMed:36434094). Catalyzes the ATP-dependent phosphorylation of ribose 1-phosphate (R1P) to ribose 1,5-bisphosphate (R15P) (PubMed:36434094). Shows weak activity towards various other phosphate acceptors, such as xylulose, 2'-deoxyguanosine and D-ribulose (PubMed:36434094). ATP is the most preferred phosphate donor, followed by CTP and GTP (PubMed:36434094).</text>
</comment>
<comment type="catalytic activity">
    <reaction evidence="2">
        <text>alpha-D-ribose 1-phosphate + ATP = alpha-D-ribose 1,5-bisphosphate + ADP + H(+)</text>
        <dbReference type="Rhea" id="RHEA:29775"/>
        <dbReference type="ChEBI" id="CHEBI:15378"/>
        <dbReference type="ChEBI" id="CHEBI:30616"/>
        <dbReference type="ChEBI" id="CHEBI:57720"/>
        <dbReference type="ChEBI" id="CHEBI:68688"/>
        <dbReference type="ChEBI" id="CHEBI:456216"/>
        <dbReference type="EC" id="2.7.1.239"/>
    </reaction>
    <physiologicalReaction direction="left-to-right" evidence="2">
        <dbReference type="Rhea" id="RHEA:29776"/>
    </physiologicalReaction>
</comment>
<comment type="cofactor">
    <cofactor evidence="5">
        <name>Mg(2+)</name>
        <dbReference type="ChEBI" id="CHEBI:18420"/>
    </cofactor>
</comment>
<comment type="activity regulation">
    <text evidence="2">Requires salt for kinase activity (PubMed:36434094). 2.0 M is the optimal KCl concentration (PubMed:36434094).</text>
</comment>
<comment type="similarity">
    <text evidence="4">Belongs to the carbohydrate kinase PfkB family.</text>
</comment>
<gene>
    <name evidence="6" type="ordered locus">Halxa_1682</name>
</gene>
<sequence length="296" mass="30821">MVRVLSAGHVNWDVTLRVDRLPEADGEASIRSQRQSGGGSAANVAAALAGLEVDAGLIGSVGDDDNGVLARRDLESAGVDLEGVRIVEAGQTAVKYLLVDDDGEVAVLGNDGVNEAVGPEEIDERRIRNADHVHLTSQRPDTAAAIARTANEAGVTVSFDPGRRLGDRDYGEALAAADVLFANDRELAALLEDEYEYVGSDFDDRIVAVKHGSDGAEVHTPTGSYVHPGFDVDAVDTAGAGDAFAAGFIATWLTDGDVERALEYANACGALTAGREGARSAPTADAVAAFLSERFD</sequence>
<organism>
    <name type="scientific">Halopiger xanaduensis (strain DSM 18323 / JCM 14033 / SH-6)</name>
    <dbReference type="NCBI Taxonomy" id="797210"/>
    <lineage>
        <taxon>Archaea</taxon>
        <taxon>Methanobacteriati</taxon>
        <taxon>Methanobacteriota</taxon>
        <taxon>Stenosarchaea group</taxon>
        <taxon>Halobacteria</taxon>
        <taxon>Halobacteriales</taxon>
        <taxon>Natrialbaceae</taxon>
        <taxon>Halopiger</taxon>
    </lineage>
</organism>
<proteinExistence type="evidence at protein level"/>